<dbReference type="EC" id="6.1.1.1" evidence="1"/>
<dbReference type="EMBL" id="CU928163">
    <property type="protein sequence ID" value="CAR13125.1"/>
    <property type="molecule type" value="Genomic_DNA"/>
</dbReference>
<dbReference type="RefSeq" id="WP_001295400.1">
    <property type="nucleotide sequence ID" value="NC_011751.1"/>
</dbReference>
<dbReference type="RefSeq" id="YP_002412657.1">
    <property type="nucleotide sequence ID" value="NC_011751.1"/>
</dbReference>
<dbReference type="SMR" id="B7NB91"/>
<dbReference type="STRING" id="585056.ECUMN_1928"/>
<dbReference type="GeneID" id="93775791"/>
<dbReference type="KEGG" id="eum:ECUMN_1928"/>
<dbReference type="PATRIC" id="fig|585056.7.peg.2111"/>
<dbReference type="HOGENOM" id="CLU_024003_0_3_6"/>
<dbReference type="Proteomes" id="UP000007097">
    <property type="component" value="Chromosome"/>
</dbReference>
<dbReference type="GO" id="GO:0005829">
    <property type="term" value="C:cytosol"/>
    <property type="evidence" value="ECO:0007669"/>
    <property type="project" value="TreeGrafter"/>
</dbReference>
<dbReference type="GO" id="GO:0005524">
    <property type="term" value="F:ATP binding"/>
    <property type="evidence" value="ECO:0007669"/>
    <property type="project" value="UniProtKB-UniRule"/>
</dbReference>
<dbReference type="GO" id="GO:0003723">
    <property type="term" value="F:RNA binding"/>
    <property type="evidence" value="ECO:0007669"/>
    <property type="project" value="UniProtKB-KW"/>
</dbReference>
<dbReference type="GO" id="GO:0004831">
    <property type="term" value="F:tyrosine-tRNA ligase activity"/>
    <property type="evidence" value="ECO:0007669"/>
    <property type="project" value="UniProtKB-UniRule"/>
</dbReference>
<dbReference type="GO" id="GO:0006437">
    <property type="term" value="P:tyrosyl-tRNA aminoacylation"/>
    <property type="evidence" value="ECO:0007669"/>
    <property type="project" value="UniProtKB-UniRule"/>
</dbReference>
<dbReference type="CDD" id="cd00165">
    <property type="entry name" value="S4"/>
    <property type="match status" value="1"/>
</dbReference>
<dbReference type="CDD" id="cd00805">
    <property type="entry name" value="TyrRS_core"/>
    <property type="match status" value="1"/>
</dbReference>
<dbReference type="FunFam" id="1.10.240.10:FF:000001">
    <property type="entry name" value="Tyrosine--tRNA ligase"/>
    <property type="match status" value="1"/>
</dbReference>
<dbReference type="FunFam" id="3.10.290.10:FF:000007">
    <property type="entry name" value="Tyrosine--tRNA ligase"/>
    <property type="match status" value="1"/>
</dbReference>
<dbReference type="FunFam" id="3.40.50.620:FF:000008">
    <property type="entry name" value="Tyrosine--tRNA ligase"/>
    <property type="match status" value="1"/>
</dbReference>
<dbReference type="Gene3D" id="3.40.50.620">
    <property type="entry name" value="HUPs"/>
    <property type="match status" value="1"/>
</dbReference>
<dbReference type="Gene3D" id="3.10.290.10">
    <property type="entry name" value="RNA-binding S4 domain"/>
    <property type="match status" value="1"/>
</dbReference>
<dbReference type="Gene3D" id="1.10.240.10">
    <property type="entry name" value="Tyrosyl-Transfer RNA Synthetase"/>
    <property type="match status" value="1"/>
</dbReference>
<dbReference type="HAMAP" id="MF_02006">
    <property type="entry name" value="Tyr_tRNA_synth_type1"/>
    <property type="match status" value="1"/>
</dbReference>
<dbReference type="InterPro" id="IPR001412">
    <property type="entry name" value="aa-tRNA-synth_I_CS"/>
</dbReference>
<dbReference type="InterPro" id="IPR002305">
    <property type="entry name" value="aa-tRNA-synth_Ic"/>
</dbReference>
<dbReference type="InterPro" id="IPR014729">
    <property type="entry name" value="Rossmann-like_a/b/a_fold"/>
</dbReference>
<dbReference type="InterPro" id="IPR002942">
    <property type="entry name" value="S4_RNA-bd"/>
</dbReference>
<dbReference type="InterPro" id="IPR036986">
    <property type="entry name" value="S4_RNA-bd_sf"/>
</dbReference>
<dbReference type="InterPro" id="IPR054608">
    <property type="entry name" value="SYY-like_C"/>
</dbReference>
<dbReference type="InterPro" id="IPR002307">
    <property type="entry name" value="Tyr-tRNA-ligase"/>
</dbReference>
<dbReference type="InterPro" id="IPR024088">
    <property type="entry name" value="Tyr-tRNA-ligase_bac-type"/>
</dbReference>
<dbReference type="InterPro" id="IPR024107">
    <property type="entry name" value="Tyr-tRNA-ligase_bac_1"/>
</dbReference>
<dbReference type="NCBIfam" id="TIGR00234">
    <property type="entry name" value="tyrS"/>
    <property type="match status" value="1"/>
</dbReference>
<dbReference type="PANTHER" id="PTHR11766:SF0">
    <property type="entry name" value="TYROSINE--TRNA LIGASE, MITOCHONDRIAL"/>
    <property type="match status" value="1"/>
</dbReference>
<dbReference type="PANTHER" id="PTHR11766">
    <property type="entry name" value="TYROSYL-TRNA SYNTHETASE"/>
    <property type="match status" value="1"/>
</dbReference>
<dbReference type="Pfam" id="PF22421">
    <property type="entry name" value="SYY_C-terminal"/>
    <property type="match status" value="1"/>
</dbReference>
<dbReference type="Pfam" id="PF00579">
    <property type="entry name" value="tRNA-synt_1b"/>
    <property type="match status" value="1"/>
</dbReference>
<dbReference type="PRINTS" id="PR01040">
    <property type="entry name" value="TRNASYNTHTYR"/>
</dbReference>
<dbReference type="SMART" id="SM00363">
    <property type="entry name" value="S4"/>
    <property type="match status" value="1"/>
</dbReference>
<dbReference type="SUPFAM" id="SSF55174">
    <property type="entry name" value="Alpha-L RNA-binding motif"/>
    <property type="match status" value="1"/>
</dbReference>
<dbReference type="SUPFAM" id="SSF52374">
    <property type="entry name" value="Nucleotidylyl transferase"/>
    <property type="match status" value="1"/>
</dbReference>
<dbReference type="PROSITE" id="PS00178">
    <property type="entry name" value="AA_TRNA_LIGASE_I"/>
    <property type="match status" value="1"/>
</dbReference>
<dbReference type="PROSITE" id="PS50889">
    <property type="entry name" value="S4"/>
    <property type="match status" value="1"/>
</dbReference>
<comment type="function">
    <text evidence="1">Catalyzes the attachment of tyrosine to tRNA(Tyr) in a two-step reaction: tyrosine is first activated by ATP to form Tyr-AMP and then transferred to the acceptor end of tRNA(Tyr).</text>
</comment>
<comment type="catalytic activity">
    <reaction evidence="1">
        <text>tRNA(Tyr) + L-tyrosine + ATP = L-tyrosyl-tRNA(Tyr) + AMP + diphosphate + H(+)</text>
        <dbReference type="Rhea" id="RHEA:10220"/>
        <dbReference type="Rhea" id="RHEA-COMP:9706"/>
        <dbReference type="Rhea" id="RHEA-COMP:9707"/>
        <dbReference type="ChEBI" id="CHEBI:15378"/>
        <dbReference type="ChEBI" id="CHEBI:30616"/>
        <dbReference type="ChEBI" id="CHEBI:33019"/>
        <dbReference type="ChEBI" id="CHEBI:58315"/>
        <dbReference type="ChEBI" id="CHEBI:78442"/>
        <dbReference type="ChEBI" id="CHEBI:78536"/>
        <dbReference type="ChEBI" id="CHEBI:456215"/>
        <dbReference type="EC" id="6.1.1.1"/>
    </reaction>
</comment>
<comment type="subunit">
    <text evidence="1">Homodimer.</text>
</comment>
<comment type="subcellular location">
    <subcellularLocation>
        <location evidence="1">Cytoplasm</location>
    </subcellularLocation>
</comment>
<comment type="similarity">
    <text evidence="1">Belongs to the class-I aminoacyl-tRNA synthetase family. TyrS type 1 subfamily.</text>
</comment>
<gene>
    <name evidence="1" type="primary">tyrS</name>
    <name type="ordered locus">ECUMN_1928</name>
</gene>
<proteinExistence type="inferred from homology"/>
<reference key="1">
    <citation type="journal article" date="2009" name="PLoS Genet.">
        <title>Organised genome dynamics in the Escherichia coli species results in highly diverse adaptive paths.</title>
        <authorList>
            <person name="Touchon M."/>
            <person name="Hoede C."/>
            <person name="Tenaillon O."/>
            <person name="Barbe V."/>
            <person name="Baeriswyl S."/>
            <person name="Bidet P."/>
            <person name="Bingen E."/>
            <person name="Bonacorsi S."/>
            <person name="Bouchier C."/>
            <person name="Bouvet O."/>
            <person name="Calteau A."/>
            <person name="Chiapello H."/>
            <person name="Clermont O."/>
            <person name="Cruveiller S."/>
            <person name="Danchin A."/>
            <person name="Diard M."/>
            <person name="Dossat C."/>
            <person name="Karoui M.E."/>
            <person name="Frapy E."/>
            <person name="Garry L."/>
            <person name="Ghigo J.M."/>
            <person name="Gilles A.M."/>
            <person name="Johnson J."/>
            <person name="Le Bouguenec C."/>
            <person name="Lescat M."/>
            <person name="Mangenot S."/>
            <person name="Martinez-Jehanne V."/>
            <person name="Matic I."/>
            <person name="Nassif X."/>
            <person name="Oztas S."/>
            <person name="Petit M.A."/>
            <person name="Pichon C."/>
            <person name="Rouy Z."/>
            <person name="Ruf C.S."/>
            <person name="Schneider D."/>
            <person name="Tourret J."/>
            <person name="Vacherie B."/>
            <person name="Vallenet D."/>
            <person name="Medigue C."/>
            <person name="Rocha E.P.C."/>
            <person name="Denamur E."/>
        </authorList>
    </citation>
    <scope>NUCLEOTIDE SEQUENCE [LARGE SCALE GENOMIC DNA]</scope>
    <source>
        <strain>UMN026 / ExPEC</strain>
    </source>
</reference>
<protein>
    <recommendedName>
        <fullName evidence="1">Tyrosine--tRNA ligase</fullName>
        <ecNumber evidence="1">6.1.1.1</ecNumber>
    </recommendedName>
    <alternativeName>
        <fullName evidence="1">Tyrosyl-tRNA synthetase</fullName>
        <shortName evidence="1">TyrRS</shortName>
    </alternativeName>
</protein>
<evidence type="ECO:0000255" key="1">
    <source>
        <dbReference type="HAMAP-Rule" id="MF_02006"/>
    </source>
</evidence>
<organism>
    <name type="scientific">Escherichia coli O17:K52:H18 (strain UMN026 / ExPEC)</name>
    <dbReference type="NCBI Taxonomy" id="585056"/>
    <lineage>
        <taxon>Bacteria</taxon>
        <taxon>Pseudomonadati</taxon>
        <taxon>Pseudomonadota</taxon>
        <taxon>Gammaproteobacteria</taxon>
        <taxon>Enterobacterales</taxon>
        <taxon>Enterobacteriaceae</taxon>
        <taxon>Escherichia</taxon>
    </lineage>
</organism>
<feature type="chain" id="PRO_1000189295" description="Tyrosine--tRNA ligase">
    <location>
        <begin position="1"/>
        <end position="424"/>
    </location>
</feature>
<feature type="domain" description="S4 RNA-binding" evidence="1">
    <location>
        <begin position="357"/>
        <end position="414"/>
    </location>
</feature>
<feature type="short sequence motif" description="'HIGH' region">
    <location>
        <begin position="42"/>
        <end position="51"/>
    </location>
</feature>
<feature type="short sequence motif" description="'KMSKS' region">
    <location>
        <begin position="235"/>
        <end position="239"/>
    </location>
</feature>
<feature type="binding site" evidence="1">
    <location>
        <position position="37"/>
    </location>
    <ligand>
        <name>L-tyrosine</name>
        <dbReference type="ChEBI" id="CHEBI:58315"/>
    </ligand>
</feature>
<feature type="binding site" evidence="1">
    <location>
        <position position="175"/>
    </location>
    <ligand>
        <name>L-tyrosine</name>
        <dbReference type="ChEBI" id="CHEBI:58315"/>
    </ligand>
</feature>
<feature type="binding site" evidence="1">
    <location>
        <position position="179"/>
    </location>
    <ligand>
        <name>L-tyrosine</name>
        <dbReference type="ChEBI" id="CHEBI:58315"/>
    </ligand>
</feature>
<feature type="binding site" evidence="1">
    <location>
        <position position="238"/>
    </location>
    <ligand>
        <name>ATP</name>
        <dbReference type="ChEBI" id="CHEBI:30616"/>
    </ligand>
</feature>
<feature type="modified residue" description="N6-acetyllysine" evidence="1">
    <location>
        <position position="144"/>
    </location>
</feature>
<sequence>MASSNLIKQLQERGLVAQVTDEEALAERLAQGPIALYCGFDPTADSLHLGHLVPLLCLKRFQQAGHKPVALVGGATGLIGDPSFKAAERKLNTEETVQEWVDKIRKQVAPFLDFDCGENSAIAANNYDWFGNMNVLTFLRDIGKHFSVNQMINKEAVKQRLNREDQGISFTEFSYNLLQGYDFACLNKQYGVVLQIGGSDQWGNITSGIDLTRRLHQNQVFGLTVPLITKADGTKFGKTEGGAVWLDPKKTSPYKFYQFWINTADADVYRFLKFFTFMSIEEINALEEEDKNSGKAPRAQYVLAEQVTRLVHGEEGLQAAKRITECLFSGSLSALSEADFEQLAQDGVPMVEMEKGADLMQALVDSELQPSRGQARKTIASNAITINGEKQSDPEYFFKEEDRLFGRFTLLRRGKKNYCLICWK</sequence>
<keyword id="KW-0007">Acetylation</keyword>
<keyword id="KW-0030">Aminoacyl-tRNA synthetase</keyword>
<keyword id="KW-0067">ATP-binding</keyword>
<keyword id="KW-0963">Cytoplasm</keyword>
<keyword id="KW-0436">Ligase</keyword>
<keyword id="KW-0547">Nucleotide-binding</keyword>
<keyword id="KW-0648">Protein biosynthesis</keyword>
<keyword id="KW-0694">RNA-binding</keyword>
<accession>B7NB91</accession>
<name>SYY_ECOLU</name>